<reference key="1">
    <citation type="journal article" date="2007" name="Genome Biol.">
        <title>Characterization and modeling of the Haemophilus influenzae core and supragenomes based on the complete genomic sequences of Rd and 12 clinical nontypeable strains.</title>
        <authorList>
            <person name="Hogg J.S."/>
            <person name="Hu F.Z."/>
            <person name="Janto B."/>
            <person name="Boissy R."/>
            <person name="Hayes J."/>
            <person name="Keefe R."/>
            <person name="Post J.C."/>
            <person name="Ehrlich G.D."/>
        </authorList>
    </citation>
    <scope>NUCLEOTIDE SEQUENCE [LARGE SCALE GENOMIC DNA]</scope>
    <source>
        <strain>PittEE</strain>
    </source>
</reference>
<proteinExistence type="inferred from homology"/>
<organism>
    <name type="scientific">Haemophilus influenzae (strain PittEE)</name>
    <dbReference type="NCBI Taxonomy" id="374930"/>
    <lineage>
        <taxon>Bacteria</taxon>
        <taxon>Pseudomonadati</taxon>
        <taxon>Pseudomonadota</taxon>
        <taxon>Gammaproteobacteria</taxon>
        <taxon>Pasteurellales</taxon>
        <taxon>Pasteurellaceae</taxon>
        <taxon>Haemophilus</taxon>
    </lineage>
</organism>
<keyword id="KW-0997">Cell inner membrane</keyword>
<keyword id="KW-1003">Cell membrane</keyword>
<keyword id="KW-0963">Cytoplasm</keyword>
<keyword id="KW-0472">Membrane</keyword>
<gene>
    <name evidence="1" type="primary">hflD</name>
    <name type="ordered locus">CGSHiEE_09030</name>
</gene>
<evidence type="ECO:0000255" key="1">
    <source>
        <dbReference type="HAMAP-Rule" id="MF_00695"/>
    </source>
</evidence>
<name>HFLD_HAEIE</name>
<sequence>MKNYHDIVLALAGVCQSAKLVHQLATESRADSDTFLTALNSLFITQPQRIEDVFGGEVRHLKLGLETLIHQLNAQGDQNLTRYWLSLLALEGKLSKNPDAKQTLGNRISRLKEQEIHYARDSETMLSIMANIYSDIISPLGKKIHILGSPDYLRQELVQNKIRAVLLAGIRSAVLWKQMGGTKWQILFFRRKLLATAKQIYSSIY</sequence>
<dbReference type="EMBL" id="CP000671">
    <property type="protein sequence ID" value="ABQ99099.1"/>
    <property type="molecule type" value="Genomic_DNA"/>
</dbReference>
<dbReference type="SMR" id="A5UE98"/>
<dbReference type="KEGG" id="hip:CGSHiEE_09030"/>
<dbReference type="HOGENOM" id="CLU_098920_0_0_6"/>
<dbReference type="GO" id="GO:0005737">
    <property type="term" value="C:cytoplasm"/>
    <property type="evidence" value="ECO:0007669"/>
    <property type="project" value="UniProtKB-SubCell"/>
</dbReference>
<dbReference type="GO" id="GO:0005886">
    <property type="term" value="C:plasma membrane"/>
    <property type="evidence" value="ECO:0007669"/>
    <property type="project" value="UniProtKB-SubCell"/>
</dbReference>
<dbReference type="FunFam" id="1.10.3890.10:FF:000001">
    <property type="entry name" value="High frequency lysogenization protein HflD homolog"/>
    <property type="match status" value="1"/>
</dbReference>
<dbReference type="Gene3D" id="1.10.3890.10">
    <property type="entry name" value="HflD-like"/>
    <property type="match status" value="1"/>
</dbReference>
<dbReference type="HAMAP" id="MF_00695">
    <property type="entry name" value="HflD_protein"/>
    <property type="match status" value="1"/>
</dbReference>
<dbReference type="InterPro" id="IPR007451">
    <property type="entry name" value="HflD"/>
</dbReference>
<dbReference type="InterPro" id="IPR035932">
    <property type="entry name" value="HflD-like_sf"/>
</dbReference>
<dbReference type="NCBIfam" id="NF001246">
    <property type="entry name" value="PRK00218.1-2"/>
    <property type="match status" value="1"/>
</dbReference>
<dbReference type="NCBIfam" id="NF001248">
    <property type="entry name" value="PRK00218.1-4"/>
    <property type="match status" value="1"/>
</dbReference>
<dbReference type="PANTHER" id="PTHR38100">
    <property type="entry name" value="HIGH FREQUENCY LYSOGENIZATION PROTEIN HFLD"/>
    <property type="match status" value="1"/>
</dbReference>
<dbReference type="PANTHER" id="PTHR38100:SF1">
    <property type="entry name" value="HIGH FREQUENCY LYSOGENIZATION PROTEIN HFLD"/>
    <property type="match status" value="1"/>
</dbReference>
<dbReference type="Pfam" id="PF04356">
    <property type="entry name" value="DUF489"/>
    <property type="match status" value="1"/>
</dbReference>
<dbReference type="SUPFAM" id="SSF101322">
    <property type="entry name" value="YcfC-like"/>
    <property type="match status" value="1"/>
</dbReference>
<protein>
    <recommendedName>
        <fullName evidence="1">High frequency lysogenization protein HflD homolog</fullName>
    </recommendedName>
</protein>
<feature type="chain" id="PRO_1000045421" description="High frequency lysogenization protein HflD homolog">
    <location>
        <begin position="1"/>
        <end position="205"/>
    </location>
</feature>
<accession>A5UE98</accession>
<comment type="subcellular location">
    <subcellularLocation>
        <location>Cytoplasm</location>
    </subcellularLocation>
    <subcellularLocation>
        <location evidence="1">Cell inner membrane</location>
        <topology evidence="1">Peripheral membrane protein</topology>
        <orientation evidence="1">Cytoplasmic side</orientation>
    </subcellularLocation>
</comment>
<comment type="similarity">
    <text evidence="1">Belongs to the HflD family.</text>
</comment>